<gene>
    <name type="primary">KLRC2</name>
    <name type="synonym">NKG2C</name>
</gene>
<sequence length="231" mass="26389">MNKQRGTFSEVSLAQDPKRQQRKPKDNKSSISGTKQEIFQVELNLQNPSLNHQGIDQIYDCQGLLPPPEKLTAEVLGIICIVLMATVLKTVVLIPFLEQNNSFPNTRTQKVRHCGHCPEEWITYSNSCYYIGKEKRTWAESLLACTSKNSSLLSIDNEEEMKFLTAISPSTWTGVFRDSSHHPWVTINGLTFKHEIKDSDHAEYNCAMLHLDRLKSVQCGSSKRYYCKHKL</sequence>
<keyword id="KW-1064">Adaptive immunity</keyword>
<keyword id="KW-1003">Cell membrane</keyword>
<keyword id="KW-1015">Disulfide bond</keyword>
<keyword id="KW-0325">Glycoprotein</keyword>
<keyword id="KW-0391">Immunity</keyword>
<keyword id="KW-0399">Innate immunity</keyword>
<keyword id="KW-0430">Lectin</keyword>
<keyword id="KW-0472">Membrane</keyword>
<keyword id="KW-0675">Receptor</keyword>
<keyword id="KW-1185">Reference proteome</keyword>
<keyword id="KW-0735">Signal-anchor</keyword>
<keyword id="KW-0812">Transmembrane</keyword>
<keyword id="KW-1133">Transmembrane helix</keyword>
<feature type="chain" id="PRO_0000046663" description="NKG2-C type II integral membrane protein">
    <location>
        <begin position="1"/>
        <end position="231"/>
    </location>
</feature>
<feature type="topological domain" description="Cytoplasmic" evidence="2">
    <location>
        <begin position="1"/>
        <end position="70"/>
    </location>
</feature>
<feature type="transmembrane region" description="Helical; Signal-anchor for type II membrane protein" evidence="2">
    <location>
        <begin position="71"/>
        <end position="93"/>
    </location>
</feature>
<feature type="topological domain" description="Extracellular" evidence="2">
    <location>
        <begin position="94"/>
        <end position="231"/>
    </location>
</feature>
<feature type="domain" description="C-type lectin" evidence="3">
    <location>
        <begin position="116"/>
        <end position="229"/>
    </location>
</feature>
<feature type="region of interest" description="Disordered" evidence="4">
    <location>
        <begin position="1"/>
        <end position="31"/>
    </location>
</feature>
<feature type="compositionally biased region" description="Polar residues" evidence="4">
    <location>
        <begin position="1"/>
        <end position="12"/>
    </location>
</feature>
<feature type="compositionally biased region" description="Basic and acidic residues" evidence="4">
    <location>
        <begin position="16"/>
        <end position="28"/>
    </location>
</feature>
<feature type="glycosylation site" description="N-linked (GlcNAc...) asparagine" evidence="2">
    <location>
        <position position="100"/>
    </location>
</feature>
<feature type="glycosylation site" description="N-linked (GlcNAc...) asparagine" evidence="2">
    <location>
        <position position="149"/>
    </location>
</feature>
<feature type="disulfide bond" evidence="3">
    <location>
        <begin position="117"/>
        <end position="128"/>
    </location>
</feature>
<feature type="disulfide bond" evidence="3">
    <location>
        <begin position="145"/>
        <end position="227"/>
    </location>
</feature>
<feature type="disulfide bond" evidence="3">
    <location>
        <begin position="206"/>
        <end position="219"/>
    </location>
</feature>
<feature type="sequence variant">
    <original>D</original>
    <variation>G</variation>
    <location>
        <position position="26"/>
    </location>
</feature>
<feature type="sequence variant">
    <original>K</original>
    <variation>E</variation>
    <location>
        <position position="35"/>
    </location>
</feature>
<name>NKG2C_MACMU</name>
<proteinExistence type="evidence at transcript level"/>
<evidence type="ECO:0000250" key="1">
    <source>
        <dbReference type="UniProtKB" id="P26717"/>
    </source>
</evidence>
<evidence type="ECO:0000255" key="2"/>
<evidence type="ECO:0000255" key="3">
    <source>
        <dbReference type="PROSITE-ProRule" id="PRU00040"/>
    </source>
</evidence>
<evidence type="ECO:0000256" key="4">
    <source>
        <dbReference type="SAM" id="MobiDB-lite"/>
    </source>
</evidence>
<reference key="1">
    <citation type="journal article" date="2000" name="Immunogenetics">
        <title>Characterization of rhesus monkey CD94/NKG2 family members and identification of novel transmembrane-deleted forms of NKG2-A, B, C, and D.</title>
        <authorList>
            <person name="LaBonte M.L."/>
            <person name="Levy D.B."/>
            <person name="Letvin N.L."/>
        </authorList>
    </citation>
    <scope>NUCLEOTIDE SEQUENCE [MRNA]</scope>
</reference>
<organism>
    <name type="scientific">Macaca mulatta</name>
    <name type="common">Rhesus macaque</name>
    <dbReference type="NCBI Taxonomy" id="9544"/>
    <lineage>
        <taxon>Eukaryota</taxon>
        <taxon>Metazoa</taxon>
        <taxon>Chordata</taxon>
        <taxon>Craniata</taxon>
        <taxon>Vertebrata</taxon>
        <taxon>Euteleostomi</taxon>
        <taxon>Mammalia</taxon>
        <taxon>Eutheria</taxon>
        <taxon>Euarchontoglires</taxon>
        <taxon>Primates</taxon>
        <taxon>Haplorrhini</taxon>
        <taxon>Catarrhini</taxon>
        <taxon>Cercopithecidae</taxon>
        <taxon>Cercopithecinae</taxon>
        <taxon>Macaca</taxon>
    </lineage>
</organism>
<comment type="function">
    <text evidence="1">Immune activating receptor involved in self-nonself discrimination. In complex with KLRD1 on cytotoxic lymphocyte subsets, recognizes non-classical major histocompatibility MHC-E loaded with signal sequence-derived peptides from non-classical MHC-G molecules, likely playing a role in the generation and effector functions of adaptive natural killer (NK) cells and in maternal-fetal tolerance during pregnancy. Regulates the effector functions of terminally differentiated cytotoxic lymphocyte subsets, and in particular may play a role in adaptive NK cell response to viral infection. Upon MHC-E-peptide binding, transmits intracellular signals via the adapter protein TYROBP/DAP12, triggering the phosphorylation of proximal signaling molecules and cell activation.</text>
</comment>
<comment type="subunit">
    <text evidence="1">Heterodimer with KLRD1; disulfide-linked. KLRD1-KLRC2 receptor complex interacts with TYROBP/DAP12 homodimer; this interaction is necessary for the expression on the cell surface.</text>
</comment>
<comment type="subcellular location">
    <subcellularLocation>
        <location evidence="1">Cell membrane</location>
        <topology evidence="2">Single-pass type II membrane protein</topology>
    </subcellularLocation>
</comment>
<comment type="tissue specificity">
    <text>Natural killer cells.</text>
</comment>
<dbReference type="EMBL" id="AF190934">
    <property type="protein sequence ID" value="AAF74530.1"/>
    <property type="molecule type" value="mRNA"/>
</dbReference>
<dbReference type="EMBL" id="AF190936">
    <property type="protein sequence ID" value="AAF74532.1"/>
    <property type="molecule type" value="mRNA"/>
</dbReference>
<dbReference type="SMR" id="Q9MZK6"/>
<dbReference type="FunCoup" id="Q9MZK6">
    <property type="interactions" value="183"/>
</dbReference>
<dbReference type="STRING" id="9544.ENSMMUP00000050583"/>
<dbReference type="GlyCosmos" id="Q9MZK6">
    <property type="glycosylation" value="2 sites, No reported glycans"/>
</dbReference>
<dbReference type="PaxDb" id="9544-ENSMMUP00000024085"/>
<dbReference type="eggNOG" id="ENOG502S6IE">
    <property type="taxonomic scope" value="Eukaryota"/>
</dbReference>
<dbReference type="InParanoid" id="Q9MZK6"/>
<dbReference type="Proteomes" id="UP000006718">
    <property type="component" value="Unassembled WGS sequence"/>
</dbReference>
<dbReference type="GO" id="GO:0009897">
    <property type="term" value="C:external side of plasma membrane"/>
    <property type="evidence" value="ECO:0000318"/>
    <property type="project" value="GO_Central"/>
</dbReference>
<dbReference type="GO" id="GO:0005886">
    <property type="term" value="C:plasma membrane"/>
    <property type="evidence" value="ECO:0000250"/>
    <property type="project" value="UniProtKB"/>
</dbReference>
<dbReference type="GO" id="GO:0062081">
    <property type="term" value="F:activating MHC class Ib receptor activity"/>
    <property type="evidence" value="ECO:0000250"/>
    <property type="project" value="UniProtKB"/>
</dbReference>
<dbReference type="GO" id="GO:0030246">
    <property type="term" value="F:carbohydrate binding"/>
    <property type="evidence" value="ECO:0007669"/>
    <property type="project" value="UniProtKB-KW"/>
</dbReference>
<dbReference type="GO" id="GO:0004888">
    <property type="term" value="F:transmembrane signaling receptor activity"/>
    <property type="evidence" value="ECO:0000318"/>
    <property type="project" value="GO_Central"/>
</dbReference>
<dbReference type="GO" id="GO:0002250">
    <property type="term" value="P:adaptive immune response"/>
    <property type="evidence" value="ECO:0007669"/>
    <property type="project" value="UniProtKB-KW"/>
</dbReference>
<dbReference type="GO" id="GO:0045087">
    <property type="term" value="P:innate immune response"/>
    <property type="evidence" value="ECO:0007669"/>
    <property type="project" value="UniProtKB-KW"/>
</dbReference>
<dbReference type="GO" id="GO:0043323">
    <property type="term" value="P:positive regulation of natural killer cell degranulation"/>
    <property type="evidence" value="ECO:0000250"/>
    <property type="project" value="UniProtKB"/>
</dbReference>
<dbReference type="GO" id="GO:0045954">
    <property type="term" value="P:positive regulation of natural killer cell mediated cytotoxicity"/>
    <property type="evidence" value="ECO:0000250"/>
    <property type="project" value="UniProtKB"/>
</dbReference>
<dbReference type="GO" id="GO:0002223">
    <property type="term" value="P:stimulatory C-type lectin receptor signaling pathway"/>
    <property type="evidence" value="ECO:0000250"/>
    <property type="project" value="UniProtKB"/>
</dbReference>
<dbReference type="CDD" id="cd03593">
    <property type="entry name" value="CLECT_NK_receptors_like"/>
    <property type="match status" value="1"/>
</dbReference>
<dbReference type="FunFam" id="1.10.287.770:FF:000009">
    <property type="entry name" value="NKG2-C type II integral membrane protein"/>
    <property type="match status" value="1"/>
</dbReference>
<dbReference type="Gene3D" id="3.10.100.10">
    <property type="entry name" value="Mannose-Binding Protein A, subunit A"/>
    <property type="match status" value="1"/>
</dbReference>
<dbReference type="Gene3D" id="1.10.287.770">
    <property type="entry name" value="YojJ-like"/>
    <property type="match status" value="1"/>
</dbReference>
<dbReference type="InterPro" id="IPR001304">
    <property type="entry name" value="C-type_lectin-like"/>
</dbReference>
<dbReference type="InterPro" id="IPR016186">
    <property type="entry name" value="C-type_lectin-like/link_sf"/>
</dbReference>
<dbReference type="InterPro" id="IPR016187">
    <property type="entry name" value="CTDL_fold"/>
</dbReference>
<dbReference type="InterPro" id="IPR050919">
    <property type="entry name" value="NKG2/CD94_NK_receptors"/>
</dbReference>
<dbReference type="InterPro" id="IPR033992">
    <property type="entry name" value="NKR-like_CTLD"/>
</dbReference>
<dbReference type="PANTHER" id="PTHR22800">
    <property type="entry name" value="C-TYPE LECTIN PROTEINS"/>
    <property type="match status" value="1"/>
</dbReference>
<dbReference type="PANTHER" id="PTHR22800:SF247">
    <property type="entry name" value="NKG2-C TYPE II INTEGRAL MEMBRANE PROTEIN"/>
    <property type="match status" value="1"/>
</dbReference>
<dbReference type="Pfam" id="PF00059">
    <property type="entry name" value="Lectin_C"/>
    <property type="match status" value="1"/>
</dbReference>
<dbReference type="SMART" id="SM00034">
    <property type="entry name" value="CLECT"/>
    <property type="match status" value="1"/>
</dbReference>
<dbReference type="SUPFAM" id="SSF56436">
    <property type="entry name" value="C-type lectin-like"/>
    <property type="match status" value="1"/>
</dbReference>
<dbReference type="PROSITE" id="PS50041">
    <property type="entry name" value="C_TYPE_LECTIN_2"/>
    <property type="match status" value="1"/>
</dbReference>
<accession>Q9MZK6</accession>
<accession>Q9MZK4</accession>
<protein>
    <recommendedName>
        <fullName>NKG2-C type II integral membrane protein</fullName>
    </recommendedName>
    <alternativeName>
        <fullName>CD159 antigen-like family member C</fullName>
    </alternativeName>
    <alternativeName>
        <fullName>NK cell receptor C</fullName>
    </alternativeName>
    <alternativeName>
        <fullName>NKG2-C-activating NK receptor</fullName>
    </alternativeName>
    <cdAntigenName>CD159c</cdAntigenName>
</protein>